<protein>
    <recommendedName>
        <fullName evidence="1">Large ribosomal subunit protein bL20</fullName>
    </recommendedName>
    <alternativeName>
        <fullName evidence="2">50S ribosomal protein L20</fullName>
    </alternativeName>
</protein>
<feature type="chain" id="PRO_0000243656" description="Large ribosomal subunit protein bL20">
    <location>
        <begin position="1"/>
        <end position="116"/>
    </location>
</feature>
<organism>
    <name type="scientific">Bacteroides fragilis (strain ATCC 25285 / DSM 2151 / CCUG 4856 / JCM 11019 / LMG 10263 / NCTC 9343 / Onslow / VPI 2553 / EN-2)</name>
    <dbReference type="NCBI Taxonomy" id="272559"/>
    <lineage>
        <taxon>Bacteria</taxon>
        <taxon>Pseudomonadati</taxon>
        <taxon>Bacteroidota</taxon>
        <taxon>Bacteroidia</taxon>
        <taxon>Bacteroidales</taxon>
        <taxon>Bacteroidaceae</taxon>
        <taxon>Bacteroides</taxon>
    </lineage>
</organism>
<proteinExistence type="inferred from homology"/>
<keyword id="KW-0687">Ribonucleoprotein</keyword>
<keyword id="KW-0689">Ribosomal protein</keyword>
<keyword id="KW-0694">RNA-binding</keyword>
<keyword id="KW-0699">rRNA-binding</keyword>
<accession>Q5LEQ3</accession>
<reference key="1">
    <citation type="journal article" date="2005" name="Science">
        <title>Extensive DNA inversions in the B. fragilis genome control variable gene expression.</title>
        <authorList>
            <person name="Cerdeno-Tarraga A.-M."/>
            <person name="Patrick S."/>
            <person name="Crossman L.C."/>
            <person name="Blakely G."/>
            <person name="Abratt V."/>
            <person name="Lennard N."/>
            <person name="Poxton I."/>
            <person name="Duerden B."/>
            <person name="Harris B."/>
            <person name="Quail M.A."/>
            <person name="Barron A."/>
            <person name="Clark L."/>
            <person name="Corton C."/>
            <person name="Doggett J."/>
            <person name="Holden M.T.G."/>
            <person name="Larke N."/>
            <person name="Line A."/>
            <person name="Lord A."/>
            <person name="Norbertczak H."/>
            <person name="Ormond D."/>
            <person name="Price C."/>
            <person name="Rabbinowitsch E."/>
            <person name="Woodward J."/>
            <person name="Barrell B.G."/>
            <person name="Parkhill J."/>
        </authorList>
    </citation>
    <scope>NUCLEOTIDE SEQUENCE [LARGE SCALE GENOMIC DNA]</scope>
    <source>
        <strain>ATCC 25285 / DSM 2151 / CCUG 4856 / JCM 11019 / LMG 10263 / NCTC 9343 / Onslow / VPI 2553 / EN-2</strain>
    </source>
</reference>
<comment type="function">
    <text evidence="1">Binds directly to 23S ribosomal RNA and is necessary for the in vitro assembly process of the 50S ribosomal subunit. It is not involved in the protein synthesizing functions of that subunit.</text>
</comment>
<comment type="similarity">
    <text evidence="1">Belongs to the bacterial ribosomal protein bL20 family.</text>
</comment>
<gene>
    <name evidence="1" type="primary">rplT</name>
    <name type="ordered locus">BF1697</name>
</gene>
<evidence type="ECO:0000255" key="1">
    <source>
        <dbReference type="HAMAP-Rule" id="MF_00382"/>
    </source>
</evidence>
<evidence type="ECO:0000305" key="2"/>
<name>RL20_BACFN</name>
<sequence length="116" mass="13232">MPRSVNHVASKARRKKILKLTRGYFGARKNVWTVAKNTWEKGLTYAFRDRRNKKRNFRALWIQRINAAARLEGMSYSKLMGGLHKAGIEINRKVLADLAVNHPEAFKAVVAKAKVA</sequence>
<dbReference type="EMBL" id="CR626927">
    <property type="protein sequence ID" value="CAH07397.1"/>
    <property type="molecule type" value="Genomic_DNA"/>
</dbReference>
<dbReference type="RefSeq" id="WP_005786577.1">
    <property type="nucleotide sequence ID" value="NZ_UFTH01000001.1"/>
</dbReference>
<dbReference type="SMR" id="Q5LEQ3"/>
<dbReference type="PaxDb" id="272559-BF9343_1616"/>
<dbReference type="GeneID" id="60369787"/>
<dbReference type="KEGG" id="bfs:BF9343_1616"/>
<dbReference type="eggNOG" id="COG0292">
    <property type="taxonomic scope" value="Bacteria"/>
</dbReference>
<dbReference type="HOGENOM" id="CLU_123265_0_1_10"/>
<dbReference type="Proteomes" id="UP000006731">
    <property type="component" value="Chromosome"/>
</dbReference>
<dbReference type="GO" id="GO:1990904">
    <property type="term" value="C:ribonucleoprotein complex"/>
    <property type="evidence" value="ECO:0007669"/>
    <property type="project" value="UniProtKB-KW"/>
</dbReference>
<dbReference type="GO" id="GO:0005840">
    <property type="term" value="C:ribosome"/>
    <property type="evidence" value="ECO:0007669"/>
    <property type="project" value="UniProtKB-KW"/>
</dbReference>
<dbReference type="GO" id="GO:0019843">
    <property type="term" value="F:rRNA binding"/>
    <property type="evidence" value="ECO:0007669"/>
    <property type="project" value="UniProtKB-UniRule"/>
</dbReference>
<dbReference type="GO" id="GO:0003735">
    <property type="term" value="F:structural constituent of ribosome"/>
    <property type="evidence" value="ECO:0007669"/>
    <property type="project" value="InterPro"/>
</dbReference>
<dbReference type="GO" id="GO:0000027">
    <property type="term" value="P:ribosomal large subunit assembly"/>
    <property type="evidence" value="ECO:0007669"/>
    <property type="project" value="UniProtKB-UniRule"/>
</dbReference>
<dbReference type="GO" id="GO:0006412">
    <property type="term" value="P:translation"/>
    <property type="evidence" value="ECO:0007669"/>
    <property type="project" value="InterPro"/>
</dbReference>
<dbReference type="CDD" id="cd07026">
    <property type="entry name" value="Ribosomal_L20"/>
    <property type="match status" value="1"/>
</dbReference>
<dbReference type="FunFam" id="1.10.1900.20:FF:000001">
    <property type="entry name" value="50S ribosomal protein L20"/>
    <property type="match status" value="1"/>
</dbReference>
<dbReference type="Gene3D" id="6.10.160.10">
    <property type="match status" value="1"/>
</dbReference>
<dbReference type="Gene3D" id="1.10.1900.20">
    <property type="entry name" value="Ribosomal protein L20"/>
    <property type="match status" value="1"/>
</dbReference>
<dbReference type="HAMAP" id="MF_00382">
    <property type="entry name" value="Ribosomal_bL20"/>
    <property type="match status" value="1"/>
</dbReference>
<dbReference type="InterPro" id="IPR005813">
    <property type="entry name" value="Ribosomal_bL20"/>
</dbReference>
<dbReference type="InterPro" id="IPR049946">
    <property type="entry name" value="RIBOSOMAL_L20_CS"/>
</dbReference>
<dbReference type="InterPro" id="IPR035566">
    <property type="entry name" value="Ribosomal_protein_bL20_C"/>
</dbReference>
<dbReference type="NCBIfam" id="TIGR01032">
    <property type="entry name" value="rplT_bact"/>
    <property type="match status" value="1"/>
</dbReference>
<dbReference type="PANTHER" id="PTHR10986">
    <property type="entry name" value="39S RIBOSOMAL PROTEIN L20"/>
    <property type="match status" value="1"/>
</dbReference>
<dbReference type="Pfam" id="PF00453">
    <property type="entry name" value="Ribosomal_L20"/>
    <property type="match status" value="1"/>
</dbReference>
<dbReference type="PRINTS" id="PR00062">
    <property type="entry name" value="RIBOSOMALL20"/>
</dbReference>
<dbReference type="SUPFAM" id="SSF74731">
    <property type="entry name" value="Ribosomal protein L20"/>
    <property type="match status" value="1"/>
</dbReference>
<dbReference type="PROSITE" id="PS00937">
    <property type="entry name" value="RIBOSOMAL_L20"/>
    <property type="match status" value="1"/>
</dbReference>